<gene>
    <name evidence="1" type="primary">murI</name>
    <name type="ordered locus">SCH_4020</name>
</gene>
<reference key="1">
    <citation type="journal article" date="2005" name="Nucleic Acids Res.">
        <title>The genome sequence of Salmonella enterica serovar Choleraesuis, a highly invasive and resistant zoonotic pathogen.</title>
        <authorList>
            <person name="Chiu C.-H."/>
            <person name="Tang P."/>
            <person name="Chu C."/>
            <person name="Hu S."/>
            <person name="Bao Q."/>
            <person name="Yu J."/>
            <person name="Chou Y.-Y."/>
            <person name="Wang H.-S."/>
            <person name="Lee Y.-S."/>
        </authorList>
    </citation>
    <scope>NUCLEOTIDE SEQUENCE [LARGE SCALE GENOMIC DNA]</scope>
    <source>
        <strain>SC-B67</strain>
    </source>
</reference>
<dbReference type="EC" id="5.1.1.3" evidence="1"/>
<dbReference type="EMBL" id="AE017220">
    <property type="protein sequence ID" value="AAX67926.1"/>
    <property type="molecule type" value="Genomic_DNA"/>
</dbReference>
<dbReference type="RefSeq" id="WP_000201804.1">
    <property type="nucleotide sequence ID" value="NC_006905.1"/>
</dbReference>
<dbReference type="SMR" id="Q57H86"/>
<dbReference type="KEGG" id="sec:SCH_4020"/>
<dbReference type="HOGENOM" id="CLU_052344_2_0_6"/>
<dbReference type="UniPathway" id="UPA00219"/>
<dbReference type="Proteomes" id="UP000000538">
    <property type="component" value="Chromosome"/>
</dbReference>
<dbReference type="GO" id="GO:0008881">
    <property type="term" value="F:glutamate racemase activity"/>
    <property type="evidence" value="ECO:0007669"/>
    <property type="project" value="UniProtKB-UniRule"/>
</dbReference>
<dbReference type="GO" id="GO:0071555">
    <property type="term" value="P:cell wall organization"/>
    <property type="evidence" value="ECO:0007669"/>
    <property type="project" value="UniProtKB-KW"/>
</dbReference>
<dbReference type="GO" id="GO:0009252">
    <property type="term" value="P:peptidoglycan biosynthetic process"/>
    <property type="evidence" value="ECO:0007669"/>
    <property type="project" value="UniProtKB-UniRule"/>
</dbReference>
<dbReference type="GO" id="GO:0008360">
    <property type="term" value="P:regulation of cell shape"/>
    <property type="evidence" value="ECO:0007669"/>
    <property type="project" value="UniProtKB-KW"/>
</dbReference>
<dbReference type="FunFam" id="3.40.50.1860:FF:000002">
    <property type="entry name" value="Glutamate racemase"/>
    <property type="match status" value="1"/>
</dbReference>
<dbReference type="Gene3D" id="3.40.50.1860">
    <property type="match status" value="2"/>
</dbReference>
<dbReference type="HAMAP" id="MF_00258">
    <property type="entry name" value="Glu_racemase"/>
    <property type="match status" value="1"/>
</dbReference>
<dbReference type="InterPro" id="IPR015942">
    <property type="entry name" value="Asp/Glu/hydantoin_racemase"/>
</dbReference>
<dbReference type="InterPro" id="IPR001920">
    <property type="entry name" value="Asp/Glu_race"/>
</dbReference>
<dbReference type="InterPro" id="IPR018187">
    <property type="entry name" value="Asp/Glu_racemase_AS_1"/>
</dbReference>
<dbReference type="InterPro" id="IPR033134">
    <property type="entry name" value="Asp/Glu_racemase_AS_2"/>
</dbReference>
<dbReference type="InterPro" id="IPR004391">
    <property type="entry name" value="Glu_race"/>
</dbReference>
<dbReference type="NCBIfam" id="TIGR00067">
    <property type="entry name" value="glut_race"/>
    <property type="match status" value="1"/>
</dbReference>
<dbReference type="NCBIfam" id="NF002034">
    <property type="entry name" value="PRK00865.1-1"/>
    <property type="match status" value="1"/>
</dbReference>
<dbReference type="PANTHER" id="PTHR21198">
    <property type="entry name" value="GLUTAMATE RACEMASE"/>
    <property type="match status" value="1"/>
</dbReference>
<dbReference type="PANTHER" id="PTHR21198:SF2">
    <property type="entry name" value="GLUTAMATE RACEMASE"/>
    <property type="match status" value="1"/>
</dbReference>
<dbReference type="Pfam" id="PF01177">
    <property type="entry name" value="Asp_Glu_race"/>
    <property type="match status" value="1"/>
</dbReference>
<dbReference type="SUPFAM" id="SSF53681">
    <property type="entry name" value="Aspartate/glutamate racemase"/>
    <property type="match status" value="2"/>
</dbReference>
<dbReference type="PROSITE" id="PS00923">
    <property type="entry name" value="ASP_GLU_RACEMASE_1"/>
    <property type="match status" value="1"/>
</dbReference>
<dbReference type="PROSITE" id="PS00924">
    <property type="entry name" value="ASP_GLU_RACEMASE_2"/>
    <property type="match status" value="1"/>
</dbReference>
<protein>
    <recommendedName>
        <fullName evidence="1">Glutamate racemase</fullName>
        <ecNumber evidence="1">5.1.1.3</ecNumber>
    </recommendedName>
</protein>
<accession>Q57H86</accession>
<name>MURI_SALCH</name>
<feature type="chain" id="PRO_1000047601" description="Glutamate racemase">
    <location>
        <begin position="1"/>
        <end position="283"/>
    </location>
</feature>
<feature type="active site" description="Proton donor/acceptor" evidence="1">
    <location>
        <position position="92"/>
    </location>
</feature>
<feature type="active site" description="Proton donor/acceptor" evidence="1">
    <location>
        <position position="204"/>
    </location>
</feature>
<feature type="binding site" evidence="1">
    <location>
        <begin position="28"/>
        <end position="29"/>
    </location>
    <ligand>
        <name>substrate</name>
    </ligand>
</feature>
<feature type="binding site" evidence="1">
    <location>
        <begin position="60"/>
        <end position="61"/>
    </location>
    <ligand>
        <name>substrate</name>
    </ligand>
</feature>
<feature type="binding site" evidence="1">
    <location>
        <begin position="93"/>
        <end position="94"/>
    </location>
    <ligand>
        <name>substrate</name>
    </ligand>
</feature>
<feature type="binding site" evidence="1">
    <location>
        <begin position="205"/>
        <end position="206"/>
    </location>
    <ligand>
        <name>substrate</name>
    </ligand>
</feature>
<organism>
    <name type="scientific">Salmonella choleraesuis (strain SC-B67)</name>
    <dbReference type="NCBI Taxonomy" id="321314"/>
    <lineage>
        <taxon>Bacteria</taxon>
        <taxon>Pseudomonadati</taxon>
        <taxon>Pseudomonadota</taxon>
        <taxon>Gammaproteobacteria</taxon>
        <taxon>Enterobacterales</taxon>
        <taxon>Enterobacteriaceae</taxon>
        <taxon>Salmonella</taxon>
    </lineage>
</organism>
<keyword id="KW-0133">Cell shape</keyword>
<keyword id="KW-0961">Cell wall biogenesis/degradation</keyword>
<keyword id="KW-0413">Isomerase</keyword>
<keyword id="KW-0573">Peptidoglycan synthesis</keyword>
<sequence length="283" mass="31017">MATKLQDENTPCLAATPSEPRPTVLVFDSGVGGLSVYDEIRRLLPDLHYIYAFDNVAFPYGEKSETFIVERVVEIVTAVQQRYPLSLAVIACNTASTVSLPALREKFAFPVVGVVPAIKPAARLTANGVVGLLATRATVKRPYTHELIARFANECQIAMLGSAELVELAEAKLHGDSVSLEELRRILRPWLRMPEPPDTVVLGCTHFPLLRDELLQVLPEGTRLVDSGAAIARRTAWLLEHEAPDAKSTDANIAYCMAMTPGAEQLLPVLQRYGFETLEKLAV</sequence>
<comment type="function">
    <text evidence="1">Provides the (R)-glutamate required for cell wall biosynthesis.</text>
</comment>
<comment type="catalytic activity">
    <reaction evidence="1">
        <text>L-glutamate = D-glutamate</text>
        <dbReference type="Rhea" id="RHEA:12813"/>
        <dbReference type="ChEBI" id="CHEBI:29985"/>
        <dbReference type="ChEBI" id="CHEBI:29986"/>
        <dbReference type="EC" id="5.1.1.3"/>
    </reaction>
</comment>
<comment type="pathway">
    <text evidence="1">Cell wall biogenesis; peptidoglycan biosynthesis.</text>
</comment>
<comment type="similarity">
    <text evidence="1">Belongs to the aspartate/glutamate racemases family.</text>
</comment>
<proteinExistence type="inferred from homology"/>
<evidence type="ECO:0000255" key="1">
    <source>
        <dbReference type="HAMAP-Rule" id="MF_00258"/>
    </source>
</evidence>